<feature type="signal peptide" evidence="2">
    <location>
        <begin position="1"/>
        <end position="31"/>
    </location>
</feature>
<feature type="chain" id="PRO_0000014800" description="Intercellular adhesion molecule 5">
    <location>
        <begin position="32"/>
        <end position="917"/>
    </location>
</feature>
<feature type="topological domain" description="Extracellular" evidence="2">
    <location>
        <begin position="32"/>
        <end position="833"/>
    </location>
</feature>
<feature type="transmembrane region" description="Helical" evidence="2">
    <location>
        <begin position="834"/>
        <end position="854"/>
    </location>
</feature>
<feature type="topological domain" description="Cytoplasmic" evidence="2">
    <location>
        <begin position="855"/>
        <end position="917"/>
    </location>
</feature>
<feature type="domain" description="Ig-like C2-type 1">
    <location>
        <begin position="48"/>
        <end position="130"/>
    </location>
</feature>
<feature type="domain" description="Ig-like C2-type 2">
    <location>
        <begin position="135"/>
        <end position="235"/>
    </location>
</feature>
<feature type="domain" description="Ig-like C2-type 3">
    <location>
        <begin position="242"/>
        <end position="329"/>
    </location>
</feature>
<feature type="domain" description="Ig-like C2-type 4">
    <location>
        <begin position="337"/>
        <end position="402"/>
    </location>
</feature>
<feature type="domain" description="Ig-like C2-type 5">
    <location>
        <begin position="408"/>
        <end position="486"/>
    </location>
</feature>
<feature type="domain" description="Ig-like C2-type 6">
    <location>
        <begin position="491"/>
        <end position="567"/>
    </location>
</feature>
<feature type="domain" description="Ig-like C2-type 7">
    <location>
        <begin position="572"/>
        <end position="651"/>
    </location>
</feature>
<feature type="domain" description="Ig-like C2-type 8">
    <location>
        <begin position="665"/>
        <end position="738"/>
    </location>
</feature>
<feature type="domain" description="Ig-like C2-type 9">
    <location>
        <begin position="745"/>
        <end position="828"/>
    </location>
</feature>
<feature type="region of interest" description="Disordered" evidence="4">
    <location>
        <begin position="884"/>
        <end position="908"/>
    </location>
</feature>
<feature type="compositionally biased region" description="Gly residues" evidence="4">
    <location>
        <begin position="884"/>
        <end position="893"/>
    </location>
</feature>
<feature type="modified residue" description="Phosphothreonine" evidence="1">
    <location>
        <position position="182"/>
    </location>
</feature>
<feature type="glycosylation site" description="N-linked (GlcNAc...) (high mannose) asparagine" evidence="5">
    <location>
        <position position="54"/>
    </location>
</feature>
<feature type="glycosylation site" description="N-linked (GlcNAc...) asparagine" evidence="2">
    <location>
        <position position="74"/>
    </location>
</feature>
<feature type="glycosylation site" description="N-linked (GlcNAc...) asparagine" evidence="2">
    <location>
        <position position="137"/>
    </location>
</feature>
<feature type="glycosylation site" description="N-linked (GlcNAc...) asparagine" evidence="2">
    <location>
        <position position="195"/>
    </location>
</feature>
<feature type="glycosylation site" description="N-linked (GlcNAc...) asparagine" evidence="2">
    <location>
        <position position="214"/>
    </location>
</feature>
<feature type="glycosylation site" description="N-linked (GlcNAc...) asparagine" evidence="2">
    <location>
        <position position="274"/>
    </location>
</feature>
<feature type="glycosylation site" description="N-linked (GlcNAc...) asparagine" evidence="2">
    <location>
        <position position="316"/>
    </location>
</feature>
<feature type="glycosylation site" description="N-linked (GlcNAc...) asparagine" evidence="2">
    <location>
        <position position="371"/>
    </location>
</feature>
<feature type="glycosylation site" description="N-linked (GlcNAc...) asparagine" evidence="2">
    <location>
        <position position="397"/>
    </location>
</feature>
<feature type="glycosylation site" description="N-linked (GlcNAc...) asparagine" evidence="2">
    <location>
        <position position="582"/>
    </location>
</feature>
<feature type="glycosylation site" description="N-linked (GlcNAc...) asparagine" evidence="2">
    <location>
        <position position="645"/>
    </location>
</feature>
<feature type="glycosylation site" description="N-linked (GlcNAc...) asparagine" evidence="2">
    <location>
        <position position="762"/>
    </location>
</feature>
<feature type="glycosylation site" description="N-linked (GlcNAc...) asparagine" evidence="2">
    <location>
        <position position="793"/>
    </location>
</feature>
<feature type="glycosylation site" description="N-linked (GlcNAc...) asparagine" evidence="2">
    <location>
        <position position="794"/>
    </location>
</feature>
<feature type="disulfide bond" evidence="3">
    <location>
        <begin position="55"/>
        <end position="99"/>
    </location>
</feature>
<feature type="disulfide bond" evidence="3">
    <location>
        <begin position="59"/>
        <end position="103"/>
    </location>
</feature>
<feature type="disulfide bond" evidence="3">
    <location>
        <begin position="142"/>
        <end position="198"/>
    </location>
</feature>
<feature type="disulfide bond" evidence="3">
    <location>
        <begin position="249"/>
        <end position="302"/>
    </location>
</feature>
<feature type="disulfide bond" evidence="3">
    <location>
        <begin position="344"/>
        <end position="383"/>
    </location>
</feature>
<feature type="disulfide bond" evidence="3">
    <location>
        <begin position="415"/>
        <end position="470"/>
    </location>
</feature>
<feature type="disulfide bond" evidence="3">
    <location>
        <begin position="498"/>
        <end position="551"/>
    </location>
</feature>
<feature type="disulfide bond" evidence="3">
    <location>
        <begin position="579"/>
        <end position="644"/>
    </location>
</feature>
<feature type="disulfide bond" evidence="3">
    <location>
        <begin position="672"/>
        <end position="724"/>
    </location>
</feature>
<feature type="disulfide bond" evidence="3">
    <location>
        <begin position="767"/>
        <end position="812"/>
    </location>
</feature>
<feature type="mutagenesis site" description="Fails to form disulfide bonds and to induce filopodia-like protrusions." evidence="5">
    <original>N</original>
    <variation>Q</variation>
    <location>
        <position position="54"/>
    </location>
</feature>
<feature type="sequence conflict" description="In Ref. 1; AAA67204." evidence="7" ref="1">
    <original>R</original>
    <variation>P</variation>
    <location>
        <position position="47"/>
    </location>
</feature>
<feature type="sequence conflict" description="In Ref. 1; AAA67204." evidence="7" ref="1">
    <original>S</original>
    <variation>T</variation>
    <location>
        <position position="310"/>
    </location>
</feature>
<feature type="sequence conflict" description="In Ref. 1; AAA67204." evidence="7" ref="1">
    <original>H</original>
    <variation>P</variation>
    <location>
        <position position="517"/>
    </location>
</feature>
<feature type="sequence conflict" description="In Ref. 2; BAE22394." evidence="7" ref="2">
    <original>R</original>
    <variation>Q</variation>
    <location>
        <position position="649"/>
    </location>
</feature>
<feature type="sequence conflict" description="In Ref. 2; BAE22394." evidence="7" ref="2">
    <original>P</original>
    <variation>R</variation>
    <location>
        <position position="664"/>
    </location>
</feature>
<feature type="sequence conflict" description="In Ref. 5; AAI13141." evidence="7" ref="5">
    <original>Q</original>
    <variation>L</variation>
    <location>
        <position position="859"/>
    </location>
</feature>
<dbReference type="EMBL" id="U06483">
    <property type="protein sequence ID" value="AAA67204.1"/>
    <property type="molecule type" value="mRNA"/>
</dbReference>
<dbReference type="EMBL" id="AK135040">
    <property type="protein sequence ID" value="BAE22394.1"/>
    <property type="molecule type" value="mRNA"/>
</dbReference>
<dbReference type="EMBL" id="AC159314">
    <property type="status" value="NOT_ANNOTATED_CDS"/>
    <property type="molecule type" value="Genomic_DNA"/>
</dbReference>
<dbReference type="EMBL" id="CH466522">
    <property type="protein sequence ID" value="EDL25153.1"/>
    <property type="molecule type" value="Genomic_DNA"/>
</dbReference>
<dbReference type="EMBL" id="BC113140">
    <property type="protein sequence ID" value="AAI13141.1"/>
    <property type="molecule type" value="mRNA"/>
</dbReference>
<dbReference type="EMBL" id="U89893">
    <property type="protein sequence ID" value="AAC53308.1"/>
    <property type="molecule type" value="Genomic_DNA"/>
</dbReference>
<dbReference type="CCDS" id="CCDS22891.1"/>
<dbReference type="PIR" id="I48950">
    <property type="entry name" value="I48950"/>
</dbReference>
<dbReference type="RefSeq" id="NP_032345.2">
    <property type="nucleotide sequence ID" value="NM_008319.3"/>
</dbReference>
<dbReference type="SMR" id="Q60625"/>
<dbReference type="BioGRID" id="200503">
    <property type="interactions" value="7"/>
</dbReference>
<dbReference type="FunCoup" id="Q60625">
    <property type="interactions" value="287"/>
</dbReference>
<dbReference type="IntAct" id="Q60625">
    <property type="interactions" value="4"/>
</dbReference>
<dbReference type="STRING" id="10090.ENSMUSP00000019616"/>
<dbReference type="CarbonylDB" id="Q60625"/>
<dbReference type="GlyConnect" id="2409">
    <property type="glycosylation" value="15 N-Linked glycans (10 sites)"/>
</dbReference>
<dbReference type="GlyCosmos" id="Q60625">
    <property type="glycosylation" value="14 sites, 15 glycans"/>
</dbReference>
<dbReference type="GlyGen" id="Q60625">
    <property type="glycosylation" value="18 sites, 27 N-linked glycans (13 sites), 1 O-linked glycan (1 site)"/>
</dbReference>
<dbReference type="iPTMnet" id="Q60625"/>
<dbReference type="PhosphoSitePlus" id="Q60625"/>
<dbReference type="SwissPalm" id="Q60625"/>
<dbReference type="PaxDb" id="10090-ENSMUSP00000019616"/>
<dbReference type="PeptideAtlas" id="Q60625"/>
<dbReference type="ProteomicsDB" id="267086"/>
<dbReference type="Antibodypedia" id="2298">
    <property type="antibodies" value="284 antibodies from 36 providers"/>
</dbReference>
<dbReference type="DNASU" id="15898"/>
<dbReference type="Ensembl" id="ENSMUST00000019616.6">
    <property type="protein sequence ID" value="ENSMUSP00000019616.5"/>
    <property type="gene ID" value="ENSMUSG00000032174.6"/>
</dbReference>
<dbReference type="GeneID" id="15898"/>
<dbReference type="KEGG" id="mmu:15898"/>
<dbReference type="UCSC" id="uc009oka.2">
    <property type="organism name" value="mouse"/>
</dbReference>
<dbReference type="AGR" id="MGI:109430"/>
<dbReference type="CTD" id="7087"/>
<dbReference type="MGI" id="MGI:109430">
    <property type="gene designation" value="Icam5"/>
</dbReference>
<dbReference type="VEuPathDB" id="HostDB:ENSMUSG00000032174"/>
<dbReference type="eggNOG" id="ENOG502QS16">
    <property type="taxonomic scope" value="Eukaryota"/>
</dbReference>
<dbReference type="GeneTree" id="ENSGT00940000162184"/>
<dbReference type="HOGENOM" id="CLU_014560_0_0_1"/>
<dbReference type="InParanoid" id="Q60625"/>
<dbReference type="OMA" id="GCPSNWT"/>
<dbReference type="OrthoDB" id="6250964at2759"/>
<dbReference type="PhylomeDB" id="Q60625"/>
<dbReference type="TreeFam" id="TF333745"/>
<dbReference type="Reactome" id="R-MMU-198933">
    <property type="pathway name" value="Immunoregulatory interactions between a Lymphoid and a non-Lymphoid cell"/>
</dbReference>
<dbReference type="Reactome" id="R-MMU-216083">
    <property type="pathway name" value="Integrin cell surface interactions"/>
</dbReference>
<dbReference type="BioGRID-ORCS" id="15898">
    <property type="hits" value="0 hits in 79 CRISPR screens"/>
</dbReference>
<dbReference type="CD-CODE" id="CE726F99">
    <property type="entry name" value="Postsynaptic density"/>
</dbReference>
<dbReference type="ChiTaRS" id="Icam5">
    <property type="organism name" value="mouse"/>
</dbReference>
<dbReference type="PRO" id="PR:Q60625"/>
<dbReference type="Proteomes" id="UP000000589">
    <property type="component" value="Chromosome 9"/>
</dbReference>
<dbReference type="RNAct" id="Q60625">
    <property type="molecule type" value="protein"/>
</dbReference>
<dbReference type="Bgee" id="ENSMUSG00000032174">
    <property type="expression patterns" value="Expressed in entorhinal cortex and 43 other cell types or tissues"/>
</dbReference>
<dbReference type="GO" id="GO:0098978">
    <property type="term" value="C:glutamatergic synapse"/>
    <property type="evidence" value="ECO:0000314"/>
    <property type="project" value="SynGO"/>
</dbReference>
<dbReference type="GO" id="GO:0005886">
    <property type="term" value="C:plasma membrane"/>
    <property type="evidence" value="ECO:0000314"/>
    <property type="project" value="MGI"/>
</dbReference>
<dbReference type="GO" id="GO:0098794">
    <property type="term" value="C:postsynapse"/>
    <property type="evidence" value="ECO:0000314"/>
    <property type="project" value="SynGO"/>
</dbReference>
<dbReference type="GO" id="GO:0005178">
    <property type="term" value="F:integrin binding"/>
    <property type="evidence" value="ECO:0007669"/>
    <property type="project" value="InterPro"/>
</dbReference>
<dbReference type="GO" id="GO:0098609">
    <property type="term" value="P:cell-cell adhesion"/>
    <property type="evidence" value="ECO:0007669"/>
    <property type="project" value="InterPro"/>
</dbReference>
<dbReference type="GO" id="GO:0006909">
    <property type="term" value="P:phagocytosis"/>
    <property type="evidence" value="ECO:0000314"/>
    <property type="project" value="MGI"/>
</dbReference>
<dbReference type="GO" id="GO:0051963">
    <property type="term" value="P:regulation of synapse assembly"/>
    <property type="evidence" value="ECO:0000314"/>
    <property type="project" value="SynGO"/>
</dbReference>
<dbReference type="CDD" id="cd05755">
    <property type="entry name" value="IgC2_2_ICAM-1_like"/>
    <property type="match status" value="1"/>
</dbReference>
<dbReference type="FunFam" id="2.60.40.10:FF:000194">
    <property type="entry name" value="Intercellular adhesion molecule 1"/>
    <property type="match status" value="1"/>
</dbReference>
<dbReference type="FunFam" id="2.60.40.10:FF:000459">
    <property type="entry name" value="Intercellular adhesion molecule 1"/>
    <property type="match status" value="1"/>
</dbReference>
<dbReference type="FunFam" id="2.60.40.10:FF:000648">
    <property type="entry name" value="Intercellular adhesion molecule 1"/>
    <property type="match status" value="1"/>
</dbReference>
<dbReference type="FunFam" id="2.60.40.10:FF:000335">
    <property type="entry name" value="Intercellular adhesion molecule 5"/>
    <property type="match status" value="3"/>
</dbReference>
<dbReference type="FunFam" id="2.60.40.10:FF:000950">
    <property type="entry name" value="Intercellular adhesion molecule 5"/>
    <property type="match status" value="1"/>
</dbReference>
<dbReference type="FunFam" id="2.60.40.10:FF:000338">
    <property type="entry name" value="intercellular adhesion molecule 5"/>
    <property type="match status" value="1"/>
</dbReference>
<dbReference type="Gene3D" id="2.60.40.10">
    <property type="entry name" value="Immunoglobulins"/>
    <property type="match status" value="9"/>
</dbReference>
<dbReference type="InterPro" id="IPR003988">
    <property type="entry name" value="ICAM"/>
</dbReference>
<dbReference type="InterPro" id="IPR048679">
    <property type="entry name" value="ICAM1_3_5_D2"/>
</dbReference>
<dbReference type="InterPro" id="IPR013768">
    <property type="entry name" value="ICAM_N"/>
</dbReference>
<dbReference type="InterPro" id="IPR047012">
    <property type="entry name" value="ICAM_VCAM"/>
</dbReference>
<dbReference type="InterPro" id="IPR003987">
    <property type="entry name" value="ICAM_VCAM_N"/>
</dbReference>
<dbReference type="InterPro" id="IPR007110">
    <property type="entry name" value="Ig-like_dom"/>
</dbReference>
<dbReference type="InterPro" id="IPR036179">
    <property type="entry name" value="Ig-like_dom_sf"/>
</dbReference>
<dbReference type="InterPro" id="IPR013783">
    <property type="entry name" value="Ig-like_fold"/>
</dbReference>
<dbReference type="InterPro" id="IPR003599">
    <property type="entry name" value="Ig_sub"/>
</dbReference>
<dbReference type="InterPro" id="IPR003598">
    <property type="entry name" value="Ig_sub2"/>
</dbReference>
<dbReference type="PANTHER" id="PTHR13771">
    <property type="entry name" value="INTERCELLULAR ADHESION MOLECULE"/>
    <property type="match status" value="1"/>
</dbReference>
<dbReference type="PANTHER" id="PTHR13771:SF9">
    <property type="entry name" value="INTERCELLULAR ADHESION MOLECULE 5"/>
    <property type="match status" value="1"/>
</dbReference>
<dbReference type="Pfam" id="PF21146">
    <property type="entry name" value="ICAM1_3_5_D2"/>
    <property type="match status" value="1"/>
</dbReference>
<dbReference type="Pfam" id="PF03921">
    <property type="entry name" value="ICAM_N"/>
    <property type="match status" value="1"/>
</dbReference>
<dbReference type="Pfam" id="PF13927">
    <property type="entry name" value="Ig_3"/>
    <property type="match status" value="1"/>
</dbReference>
<dbReference type="PRINTS" id="PR01473">
    <property type="entry name" value="ICAM"/>
</dbReference>
<dbReference type="PRINTS" id="PR01472">
    <property type="entry name" value="ICAMVCAM1"/>
</dbReference>
<dbReference type="SMART" id="SM00409">
    <property type="entry name" value="IG"/>
    <property type="match status" value="6"/>
</dbReference>
<dbReference type="SMART" id="SM00408">
    <property type="entry name" value="IGc2"/>
    <property type="match status" value="4"/>
</dbReference>
<dbReference type="SUPFAM" id="SSF48726">
    <property type="entry name" value="Immunoglobulin"/>
    <property type="match status" value="9"/>
</dbReference>
<dbReference type="PROSITE" id="PS50835">
    <property type="entry name" value="IG_LIKE"/>
    <property type="match status" value="4"/>
</dbReference>
<evidence type="ECO:0000250" key="1">
    <source>
        <dbReference type="UniProtKB" id="Q9UMF0"/>
    </source>
</evidence>
<evidence type="ECO:0000255" key="2"/>
<evidence type="ECO:0000255" key="3">
    <source>
        <dbReference type="PROSITE-ProRule" id="PRU00114"/>
    </source>
</evidence>
<evidence type="ECO:0000256" key="4">
    <source>
        <dbReference type="SAM" id="MobiDB-lite"/>
    </source>
</evidence>
<evidence type="ECO:0000269" key="5">
    <source>
    </source>
</evidence>
<evidence type="ECO:0000269" key="6">
    <source>
    </source>
</evidence>
<evidence type="ECO:0000305" key="7"/>
<gene>
    <name type="primary">Icam5</name>
    <name type="synonym">Icam3</name>
    <name type="synonym">Tlcn</name>
</gene>
<protein>
    <recommendedName>
        <fullName>Intercellular adhesion molecule 5</fullName>
        <shortName>ICAM-5</shortName>
    </recommendedName>
    <alternativeName>
        <fullName>Telencephalin</fullName>
    </alternativeName>
</protein>
<name>ICAM5_MOUSE</name>
<reference key="1">
    <citation type="journal article" date="1994" name="Neuron">
        <title>An ICAM-related neuronal glycoprotein, telencephalin, with brain segment-specific expression.</title>
        <authorList>
            <person name="Yoshihara Y."/>
            <person name="Oka S."/>
            <person name="Nemoto Y."/>
            <person name="Watanabe Y."/>
            <person name="Nagata S."/>
            <person name="Kagamiyama H."/>
            <person name="Mori K."/>
        </authorList>
    </citation>
    <scope>NUCLEOTIDE SEQUENCE [MRNA]</scope>
    <scope>FUNCTION</scope>
    <scope>SUBCELLULAR LOCATION</scope>
    <scope>TISSUE SPECIFICITY</scope>
    <source>
        <strain>BALB/cJ</strain>
        <tissue>Brain</tissue>
    </source>
</reference>
<reference key="2">
    <citation type="journal article" date="2005" name="Science">
        <title>The transcriptional landscape of the mammalian genome.</title>
        <authorList>
            <person name="Carninci P."/>
            <person name="Kasukawa T."/>
            <person name="Katayama S."/>
            <person name="Gough J."/>
            <person name="Frith M.C."/>
            <person name="Maeda N."/>
            <person name="Oyama R."/>
            <person name="Ravasi T."/>
            <person name="Lenhard B."/>
            <person name="Wells C."/>
            <person name="Kodzius R."/>
            <person name="Shimokawa K."/>
            <person name="Bajic V.B."/>
            <person name="Brenner S.E."/>
            <person name="Batalov S."/>
            <person name="Forrest A.R."/>
            <person name="Zavolan M."/>
            <person name="Davis M.J."/>
            <person name="Wilming L.G."/>
            <person name="Aidinis V."/>
            <person name="Allen J.E."/>
            <person name="Ambesi-Impiombato A."/>
            <person name="Apweiler R."/>
            <person name="Aturaliya R.N."/>
            <person name="Bailey T.L."/>
            <person name="Bansal M."/>
            <person name="Baxter L."/>
            <person name="Beisel K.W."/>
            <person name="Bersano T."/>
            <person name="Bono H."/>
            <person name="Chalk A.M."/>
            <person name="Chiu K.P."/>
            <person name="Choudhary V."/>
            <person name="Christoffels A."/>
            <person name="Clutterbuck D.R."/>
            <person name="Crowe M.L."/>
            <person name="Dalla E."/>
            <person name="Dalrymple B.P."/>
            <person name="de Bono B."/>
            <person name="Della Gatta G."/>
            <person name="di Bernardo D."/>
            <person name="Down T."/>
            <person name="Engstrom P."/>
            <person name="Fagiolini M."/>
            <person name="Faulkner G."/>
            <person name="Fletcher C.F."/>
            <person name="Fukushima T."/>
            <person name="Furuno M."/>
            <person name="Futaki S."/>
            <person name="Gariboldi M."/>
            <person name="Georgii-Hemming P."/>
            <person name="Gingeras T.R."/>
            <person name="Gojobori T."/>
            <person name="Green R.E."/>
            <person name="Gustincich S."/>
            <person name="Harbers M."/>
            <person name="Hayashi Y."/>
            <person name="Hensch T.K."/>
            <person name="Hirokawa N."/>
            <person name="Hill D."/>
            <person name="Huminiecki L."/>
            <person name="Iacono M."/>
            <person name="Ikeo K."/>
            <person name="Iwama A."/>
            <person name="Ishikawa T."/>
            <person name="Jakt M."/>
            <person name="Kanapin A."/>
            <person name="Katoh M."/>
            <person name="Kawasawa Y."/>
            <person name="Kelso J."/>
            <person name="Kitamura H."/>
            <person name="Kitano H."/>
            <person name="Kollias G."/>
            <person name="Krishnan S.P."/>
            <person name="Kruger A."/>
            <person name="Kummerfeld S.K."/>
            <person name="Kurochkin I.V."/>
            <person name="Lareau L.F."/>
            <person name="Lazarevic D."/>
            <person name="Lipovich L."/>
            <person name="Liu J."/>
            <person name="Liuni S."/>
            <person name="McWilliam S."/>
            <person name="Madan Babu M."/>
            <person name="Madera M."/>
            <person name="Marchionni L."/>
            <person name="Matsuda H."/>
            <person name="Matsuzawa S."/>
            <person name="Miki H."/>
            <person name="Mignone F."/>
            <person name="Miyake S."/>
            <person name="Morris K."/>
            <person name="Mottagui-Tabar S."/>
            <person name="Mulder N."/>
            <person name="Nakano N."/>
            <person name="Nakauchi H."/>
            <person name="Ng P."/>
            <person name="Nilsson R."/>
            <person name="Nishiguchi S."/>
            <person name="Nishikawa S."/>
            <person name="Nori F."/>
            <person name="Ohara O."/>
            <person name="Okazaki Y."/>
            <person name="Orlando V."/>
            <person name="Pang K.C."/>
            <person name="Pavan W.J."/>
            <person name="Pavesi G."/>
            <person name="Pesole G."/>
            <person name="Petrovsky N."/>
            <person name="Piazza S."/>
            <person name="Reed J."/>
            <person name="Reid J.F."/>
            <person name="Ring B.Z."/>
            <person name="Ringwald M."/>
            <person name="Rost B."/>
            <person name="Ruan Y."/>
            <person name="Salzberg S.L."/>
            <person name="Sandelin A."/>
            <person name="Schneider C."/>
            <person name="Schoenbach C."/>
            <person name="Sekiguchi K."/>
            <person name="Semple C.A."/>
            <person name="Seno S."/>
            <person name="Sessa L."/>
            <person name="Sheng Y."/>
            <person name="Shibata Y."/>
            <person name="Shimada H."/>
            <person name="Shimada K."/>
            <person name="Silva D."/>
            <person name="Sinclair B."/>
            <person name="Sperling S."/>
            <person name="Stupka E."/>
            <person name="Sugiura K."/>
            <person name="Sultana R."/>
            <person name="Takenaka Y."/>
            <person name="Taki K."/>
            <person name="Tammoja K."/>
            <person name="Tan S.L."/>
            <person name="Tang S."/>
            <person name="Taylor M.S."/>
            <person name="Tegner J."/>
            <person name="Teichmann S.A."/>
            <person name="Ueda H.R."/>
            <person name="van Nimwegen E."/>
            <person name="Verardo R."/>
            <person name="Wei C.L."/>
            <person name="Yagi K."/>
            <person name="Yamanishi H."/>
            <person name="Zabarovsky E."/>
            <person name="Zhu S."/>
            <person name="Zimmer A."/>
            <person name="Hide W."/>
            <person name="Bult C."/>
            <person name="Grimmond S.M."/>
            <person name="Teasdale R.D."/>
            <person name="Liu E.T."/>
            <person name="Brusic V."/>
            <person name="Quackenbush J."/>
            <person name="Wahlestedt C."/>
            <person name="Mattick J.S."/>
            <person name="Hume D.A."/>
            <person name="Kai C."/>
            <person name="Sasaki D."/>
            <person name="Tomaru Y."/>
            <person name="Fukuda S."/>
            <person name="Kanamori-Katayama M."/>
            <person name="Suzuki M."/>
            <person name="Aoki J."/>
            <person name="Arakawa T."/>
            <person name="Iida J."/>
            <person name="Imamura K."/>
            <person name="Itoh M."/>
            <person name="Kato T."/>
            <person name="Kawaji H."/>
            <person name="Kawagashira N."/>
            <person name="Kawashima T."/>
            <person name="Kojima M."/>
            <person name="Kondo S."/>
            <person name="Konno H."/>
            <person name="Nakano K."/>
            <person name="Ninomiya N."/>
            <person name="Nishio T."/>
            <person name="Okada M."/>
            <person name="Plessy C."/>
            <person name="Shibata K."/>
            <person name="Shiraki T."/>
            <person name="Suzuki S."/>
            <person name="Tagami M."/>
            <person name="Waki K."/>
            <person name="Watahiki A."/>
            <person name="Okamura-Oho Y."/>
            <person name="Suzuki H."/>
            <person name="Kawai J."/>
            <person name="Hayashizaki Y."/>
        </authorList>
    </citation>
    <scope>NUCLEOTIDE SEQUENCE [LARGE SCALE MRNA]</scope>
    <source>
        <strain>C57BL/6J</strain>
        <tissue>Olfactory bulb</tissue>
    </source>
</reference>
<reference key="3">
    <citation type="journal article" date="2009" name="PLoS Biol.">
        <title>Lineage-specific biology revealed by a finished genome assembly of the mouse.</title>
        <authorList>
            <person name="Church D.M."/>
            <person name="Goodstadt L."/>
            <person name="Hillier L.W."/>
            <person name="Zody M.C."/>
            <person name="Goldstein S."/>
            <person name="She X."/>
            <person name="Bult C.J."/>
            <person name="Agarwala R."/>
            <person name="Cherry J.L."/>
            <person name="DiCuccio M."/>
            <person name="Hlavina W."/>
            <person name="Kapustin Y."/>
            <person name="Meric P."/>
            <person name="Maglott D."/>
            <person name="Birtle Z."/>
            <person name="Marques A.C."/>
            <person name="Graves T."/>
            <person name="Zhou S."/>
            <person name="Teague B."/>
            <person name="Potamousis K."/>
            <person name="Churas C."/>
            <person name="Place M."/>
            <person name="Herschleb J."/>
            <person name="Runnheim R."/>
            <person name="Forrest D."/>
            <person name="Amos-Landgraf J."/>
            <person name="Schwartz D.C."/>
            <person name="Cheng Z."/>
            <person name="Lindblad-Toh K."/>
            <person name="Eichler E.E."/>
            <person name="Ponting C.P."/>
        </authorList>
    </citation>
    <scope>NUCLEOTIDE SEQUENCE [LARGE SCALE GENOMIC DNA]</scope>
    <source>
        <strain>C57BL/6J</strain>
    </source>
</reference>
<reference key="4">
    <citation type="submission" date="2005-07" db="EMBL/GenBank/DDBJ databases">
        <authorList>
            <person name="Mural R.J."/>
            <person name="Adams M.D."/>
            <person name="Myers E.W."/>
            <person name="Smith H.O."/>
            <person name="Venter J.C."/>
        </authorList>
    </citation>
    <scope>NUCLEOTIDE SEQUENCE [LARGE SCALE GENOMIC DNA]</scope>
</reference>
<reference key="5">
    <citation type="journal article" date="2004" name="Genome Res.">
        <title>The status, quality, and expansion of the NIH full-length cDNA project: the Mammalian Gene Collection (MGC).</title>
        <authorList>
            <consortium name="The MGC Project Team"/>
        </authorList>
    </citation>
    <scope>NUCLEOTIDE SEQUENCE [LARGE SCALE MRNA]</scope>
</reference>
<reference key="6">
    <citation type="journal article" date="1997" name="Genomics">
        <title>Genomic organization and chromosomal localization of the mouse telencephalin gene, a neuronal member of the ICAM family.</title>
        <authorList>
            <person name="Sugino H."/>
            <person name="Yoshihara Y."/>
            <person name="Copeland N.G."/>
            <person name="Gilbert D.J."/>
            <person name="Jenkins N.A."/>
            <person name="Mori K."/>
        </authorList>
    </citation>
    <scope>NUCLEOTIDE SEQUENCE [GENOMIC DNA] OF 1-27</scope>
    <source>
        <strain>C57BL/CBA</strain>
    </source>
</reference>
<reference key="7">
    <citation type="journal article" date="2010" name="Cell">
        <title>A tissue-specific atlas of mouse protein phosphorylation and expression.</title>
        <authorList>
            <person name="Huttlin E.L."/>
            <person name="Jedrychowski M.P."/>
            <person name="Elias J.E."/>
            <person name="Goswami T."/>
            <person name="Rad R."/>
            <person name="Beausoleil S.A."/>
            <person name="Villen J."/>
            <person name="Haas W."/>
            <person name="Sowa M.E."/>
            <person name="Gygi S.P."/>
        </authorList>
    </citation>
    <scope>IDENTIFICATION BY MASS SPECTROMETRY [LARGE SCALE ANALYSIS]</scope>
    <source>
        <tissue>Brain</tissue>
    </source>
</reference>
<reference key="8">
    <citation type="journal article" date="2012" name="Glycoconj. J.">
        <title>Asn54-linked glycan is critical for functional folding of intercellular adhesion molecule-5.</title>
        <authorList>
            <person name="Ohgomori T."/>
            <person name="Nanao T."/>
            <person name="Morita A."/>
            <person name="Ikekita M."/>
        </authorList>
    </citation>
    <scope>GLYCOSYLATION AT ASN-54</scope>
    <scope>MUTAGENESIS OF ASN-54</scope>
</reference>
<keyword id="KW-0130">Cell adhesion</keyword>
<keyword id="KW-1015">Disulfide bond</keyword>
<keyword id="KW-0325">Glycoprotein</keyword>
<keyword id="KW-0393">Immunoglobulin domain</keyword>
<keyword id="KW-0472">Membrane</keyword>
<keyword id="KW-0597">Phosphoprotein</keyword>
<keyword id="KW-1185">Reference proteome</keyword>
<keyword id="KW-0677">Repeat</keyword>
<keyword id="KW-0732">Signal</keyword>
<keyword id="KW-0812">Transmembrane</keyword>
<keyword id="KW-1133">Transmembrane helix</keyword>
<sequence>MPGPSPGLRRALLGLWAALGLGILGISAVALEPFWADLQPRVALVERGGSLWLNCSTNCPRPERGGLETSLRRNGTQRGLRWLARQLVDIREPETQPVCFFRCARRTLQARGLIRTFQRPDRVELVPLPSWQPVGENFTLSCRVPGAGPRASLTLTLLRGGQELIRRSFVGEPPRARGAMLTARVLARREDHRVNFSCLAELDLRPHGLGLFANSSAPRQLRTFAMPPHSPSLIAPRVLEVDSERPVTCTLDGLFPAPEAGVYLSLGDQRLNPNVTLDGDSLVATATATASAEQEGTKQLMCVVTLGGESRETQENLTVYSFPTPLLTLSEPEAPEGKMVTISCWAGARALVTLEGIPAAVPGQPAELQLNVTKNDDKRGFFCDAALDVDGETLRKNQSSELRVLYAPRLDDLDCPRSWTWPEGPEQTLHCEARGNPEPSVHCARPEGGAVLALGLLGPVTRALAGTYRCTAVNGQGQAVKDVTLTVEYAPALDSVGCPEHITWLEGTEASLSCVAHGVPPPSVSCVRSGKEEVMEGPLRVAREHAGTYRCEAINARGSAAKNVAVTVEYGPSFEELGCPSNWTWVEGSGKLFSCEVDGKPEPRVECVGSEGASEGIVLPLVSSNSGPRNSMTPGNLSPGIYLCNATNRHGSTVKTVVVSAESPPQMDESSCPSHQTWLEGAEATALACSARGRPSPRVHCSREGAARLERLQVSREDAGTYRCVATNAHGTDSRTVTVGVEYRPVVAELAASPPSVRPGGNFTLTCRAEAWPPAQISWRAPPGALNLGLSSNNSTLSVAGAMGSHGGEYECAATNAHGRHARRITVRVAGPWLWVAVGGAAGGAALLAAGAGLAFYVQSTACKKGEYNVQEAESSGEAVCLNGAGGTPGAEGGAETPGTAESPADGEVFAIQLTSS</sequence>
<organism>
    <name type="scientific">Mus musculus</name>
    <name type="common">Mouse</name>
    <dbReference type="NCBI Taxonomy" id="10090"/>
    <lineage>
        <taxon>Eukaryota</taxon>
        <taxon>Metazoa</taxon>
        <taxon>Chordata</taxon>
        <taxon>Craniata</taxon>
        <taxon>Vertebrata</taxon>
        <taxon>Euteleostomi</taxon>
        <taxon>Mammalia</taxon>
        <taxon>Eutheria</taxon>
        <taxon>Euarchontoglires</taxon>
        <taxon>Glires</taxon>
        <taxon>Rodentia</taxon>
        <taxon>Myomorpha</taxon>
        <taxon>Muroidea</taxon>
        <taxon>Muridae</taxon>
        <taxon>Murinae</taxon>
        <taxon>Mus</taxon>
        <taxon>Mus</taxon>
    </lineage>
</organism>
<proteinExistence type="evidence at protein level"/>
<comment type="function">
    <text evidence="6">ICAM proteins are ligands for the leukocyte adhesion protein LFA-1 (integrin alpha-L/beta-2).</text>
</comment>
<comment type="subcellular location">
    <subcellularLocation>
        <location evidence="6">Membrane</location>
        <topology evidence="6">Single-pass type I membrane protein</topology>
    </subcellularLocation>
</comment>
<comment type="tissue specificity">
    <text evidence="6">Expressed on neurons in the most rostral segment of the mammalian brain, the telencephalon.</text>
</comment>
<comment type="PTM">
    <text evidence="5">Glycosylation at Asn-54 is critical for functional folding.</text>
</comment>
<comment type="similarity">
    <text evidence="7">Belongs to the immunoglobulin superfamily. ICAM family.</text>
</comment>
<accession>Q60625</accession>
<accession>G5E826</accession>
<accession>Q2KHL7</accession>
<accession>Q3UY19</accession>